<dbReference type="EC" id="2.4.99.28" evidence="2"/>
<dbReference type="EMBL" id="CP000109">
    <property type="protein sequence ID" value="ABB41163.1"/>
    <property type="molecule type" value="Genomic_DNA"/>
</dbReference>
<dbReference type="SMR" id="Q31I60"/>
<dbReference type="STRING" id="317025.Tcr_0567"/>
<dbReference type="KEGG" id="tcx:Tcr_0567"/>
<dbReference type="eggNOG" id="COG0772">
    <property type="taxonomic scope" value="Bacteria"/>
</dbReference>
<dbReference type="HOGENOM" id="CLU_029243_1_1_6"/>
<dbReference type="OrthoDB" id="9768187at2"/>
<dbReference type="UniPathway" id="UPA00219"/>
<dbReference type="GO" id="GO:0032153">
    <property type="term" value="C:cell division site"/>
    <property type="evidence" value="ECO:0007669"/>
    <property type="project" value="UniProtKB-UniRule"/>
</dbReference>
<dbReference type="GO" id="GO:0005886">
    <property type="term" value="C:plasma membrane"/>
    <property type="evidence" value="ECO:0007669"/>
    <property type="project" value="UniProtKB-SubCell"/>
</dbReference>
<dbReference type="GO" id="GO:0015648">
    <property type="term" value="F:lipid-linked peptidoglycan transporter activity"/>
    <property type="evidence" value="ECO:0007669"/>
    <property type="project" value="TreeGrafter"/>
</dbReference>
<dbReference type="GO" id="GO:0008955">
    <property type="term" value="F:peptidoglycan glycosyltransferase activity"/>
    <property type="evidence" value="ECO:0007669"/>
    <property type="project" value="UniProtKB-UniRule"/>
</dbReference>
<dbReference type="GO" id="GO:0071555">
    <property type="term" value="P:cell wall organization"/>
    <property type="evidence" value="ECO:0007669"/>
    <property type="project" value="UniProtKB-KW"/>
</dbReference>
<dbReference type="GO" id="GO:0043093">
    <property type="term" value="P:FtsZ-dependent cytokinesis"/>
    <property type="evidence" value="ECO:0007669"/>
    <property type="project" value="UniProtKB-UniRule"/>
</dbReference>
<dbReference type="GO" id="GO:0009252">
    <property type="term" value="P:peptidoglycan biosynthetic process"/>
    <property type="evidence" value="ECO:0007669"/>
    <property type="project" value="UniProtKB-UniRule"/>
</dbReference>
<dbReference type="GO" id="GO:0008360">
    <property type="term" value="P:regulation of cell shape"/>
    <property type="evidence" value="ECO:0007669"/>
    <property type="project" value="UniProtKB-KW"/>
</dbReference>
<dbReference type="HAMAP" id="MF_00913">
    <property type="entry name" value="PGT_FtsW_proteobact"/>
    <property type="match status" value="1"/>
</dbReference>
<dbReference type="InterPro" id="IPR018365">
    <property type="entry name" value="Cell_cycle_FtsW-rel_CS"/>
</dbReference>
<dbReference type="InterPro" id="IPR013437">
    <property type="entry name" value="FtsW"/>
</dbReference>
<dbReference type="InterPro" id="IPR001182">
    <property type="entry name" value="FtsW/RodA"/>
</dbReference>
<dbReference type="NCBIfam" id="TIGR02614">
    <property type="entry name" value="ftsW"/>
    <property type="match status" value="1"/>
</dbReference>
<dbReference type="PANTHER" id="PTHR30474">
    <property type="entry name" value="CELL CYCLE PROTEIN"/>
    <property type="match status" value="1"/>
</dbReference>
<dbReference type="PANTHER" id="PTHR30474:SF2">
    <property type="entry name" value="PEPTIDOGLYCAN GLYCOSYLTRANSFERASE FTSW-RELATED"/>
    <property type="match status" value="1"/>
</dbReference>
<dbReference type="Pfam" id="PF01098">
    <property type="entry name" value="FTSW_RODA_SPOVE"/>
    <property type="match status" value="1"/>
</dbReference>
<dbReference type="PROSITE" id="PS00428">
    <property type="entry name" value="FTSW_RODA_SPOVE"/>
    <property type="match status" value="1"/>
</dbReference>
<organism>
    <name type="scientific">Hydrogenovibrio crunogenus (strain DSM 25203 / XCL-2)</name>
    <name type="common">Thiomicrospira crunogena</name>
    <dbReference type="NCBI Taxonomy" id="317025"/>
    <lineage>
        <taxon>Bacteria</taxon>
        <taxon>Pseudomonadati</taxon>
        <taxon>Pseudomonadota</taxon>
        <taxon>Gammaproteobacteria</taxon>
        <taxon>Thiotrichales</taxon>
        <taxon>Piscirickettsiaceae</taxon>
        <taxon>Hydrogenovibrio</taxon>
    </lineage>
</organism>
<accession>Q31I60</accession>
<protein>
    <recommendedName>
        <fullName evidence="2">Probable peptidoglycan glycosyltransferase FtsW</fullName>
        <shortName evidence="2">PGT</shortName>
        <ecNumber evidence="2">2.4.99.28</ecNumber>
    </recommendedName>
    <alternativeName>
        <fullName evidence="2">Cell division protein FtsW</fullName>
    </alternativeName>
    <alternativeName>
        <fullName evidence="2">Cell wall polymerase</fullName>
    </alternativeName>
    <alternativeName>
        <fullName evidence="2">Peptidoglycan polymerase</fullName>
        <shortName evidence="2">PG polymerase</shortName>
    </alternativeName>
</protein>
<evidence type="ECO:0000255" key="1"/>
<evidence type="ECO:0000255" key="2">
    <source>
        <dbReference type="HAMAP-Rule" id="MF_00913"/>
    </source>
</evidence>
<comment type="function">
    <text evidence="2">Peptidoglycan polymerase that is essential for cell division.</text>
</comment>
<comment type="catalytic activity">
    <reaction evidence="2">
        <text>[GlcNAc-(1-&gt;4)-Mur2Ac(oyl-L-Ala-gamma-D-Glu-L-Lys-D-Ala-D-Ala)](n)-di-trans,octa-cis-undecaprenyl diphosphate + beta-D-GlcNAc-(1-&gt;4)-Mur2Ac(oyl-L-Ala-gamma-D-Glu-L-Lys-D-Ala-D-Ala)-di-trans,octa-cis-undecaprenyl diphosphate = [GlcNAc-(1-&gt;4)-Mur2Ac(oyl-L-Ala-gamma-D-Glu-L-Lys-D-Ala-D-Ala)](n+1)-di-trans,octa-cis-undecaprenyl diphosphate + di-trans,octa-cis-undecaprenyl diphosphate + H(+)</text>
        <dbReference type="Rhea" id="RHEA:23708"/>
        <dbReference type="Rhea" id="RHEA-COMP:9602"/>
        <dbReference type="Rhea" id="RHEA-COMP:9603"/>
        <dbReference type="ChEBI" id="CHEBI:15378"/>
        <dbReference type="ChEBI" id="CHEBI:58405"/>
        <dbReference type="ChEBI" id="CHEBI:60033"/>
        <dbReference type="ChEBI" id="CHEBI:78435"/>
        <dbReference type="EC" id="2.4.99.28"/>
    </reaction>
</comment>
<comment type="pathway">
    <text evidence="2">Cell wall biogenesis; peptidoglycan biosynthesis.</text>
</comment>
<comment type="subcellular location">
    <subcellularLocation>
        <location evidence="2">Cell inner membrane</location>
        <topology evidence="2">Multi-pass membrane protein</topology>
    </subcellularLocation>
    <text evidence="2">Localizes to the division septum.</text>
</comment>
<comment type="similarity">
    <text evidence="2">Belongs to the SEDS family. FtsW subfamily.</text>
</comment>
<proteinExistence type="inferred from homology"/>
<sequence>MPIRDWRQQSQRWPIDYWLIGALAILITLGLTMVASSSIAISEKRFGDPTHYLLRQMFSMGLGLMAAYIVLKIPLSFWRKHRGQLFIVGLVLLVLVLVFGREINGSKRWLPLVLMNFQVSEFMKIAVVVFMAGYLDRHATAVRESFEAVIRLALPFGVMAILLLLEPDFGSTFVIAVIITGMLLIAGAPWRFFVMTVLPIATLLVMMVITSPYRMARVTNFLDPWSDPFGNGYQLTQALIASGRGEWFGVGIGESVQKLLYLPDAHTDFLFSIYAEEYGLIGVAFLALLYLTLLYRCFRIGRKAFNQTHYFGGLIAYGVGIWIVLQAMINMGVNLGLFPTKGLTLPFMSYGGSSVLMLFIGVAMVLRVDLETRQAVLEHSVDESGQGKR</sequence>
<name>FTSW_HYDCU</name>
<feature type="chain" id="PRO_0000415217" description="Probable peptidoglycan glycosyltransferase FtsW">
    <location>
        <begin position="1"/>
        <end position="389"/>
    </location>
</feature>
<feature type="topological domain" description="Cytoplasmic" evidence="1">
    <location>
        <begin position="1"/>
        <end position="14"/>
    </location>
</feature>
<feature type="transmembrane region" description="Helical" evidence="2">
    <location>
        <begin position="15"/>
        <end position="35"/>
    </location>
</feature>
<feature type="topological domain" description="Periplasmic" evidence="1">
    <location>
        <begin position="36"/>
        <end position="57"/>
    </location>
</feature>
<feature type="transmembrane region" description="Helical" evidence="2">
    <location>
        <begin position="58"/>
        <end position="78"/>
    </location>
</feature>
<feature type="topological domain" description="Cytoplasmic" evidence="1">
    <location>
        <begin position="79"/>
        <end position="84"/>
    </location>
</feature>
<feature type="transmembrane region" description="Helical" evidence="2">
    <location>
        <begin position="85"/>
        <end position="105"/>
    </location>
</feature>
<feature type="topological domain" description="Periplasmic" evidence="1">
    <location>
        <begin position="106"/>
        <end position="111"/>
    </location>
</feature>
<feature type="transmembrane region" description="Helical" evidence="2">
    <location>
        <begin position="112"/>
        <end position="132"/>
    </location>
</feature>
<feature type="topological domain" description="Cytoplasmic" evidence="1">
    <location>
        <begin position="133"/>
        <end position="144"/>
    </location>
</feature>
<feature type="transmembrane region" description="Helical" evidence="2">
    <location>
        <begin position="145"/>
        <end position="165"/>
    </location>
</feature>
<feature type="topological domain" description="Periplasmic" evidence="1">
    <location>
        <begin position="166"/>
        <end position="168"/>
    </location>
</feature>
<feature type="transmembrane region" description="Helical" evidence="2">
    <location>
        <begin position="169"/>
        <end position="189"/>
    </location>
</feature>
<feature type="topological domain" description="Cytoplasmic" evidence="1">
    <location>
        <begin position="190"/>
        <end position="191"/>
    </location>
</feature>
<feature type="transmembrane region" description="Helical" evidence="2">
    <location>
        <begin position="192"/>
        <end position="212"/>
    </location>
</feature>
<feature type="topological domain" description="Periplasmic" evidence="1">
    <location>
        <begin position="213"/>
        <end position="268"/>
    </location>
</feature>
<feature type="transmembrane region" description="Helical" evidence="2">
    <location>
        <begin position="269"/>
        <end position="289"/>
    </location>
</feature>
<feature type="topological domain" description="Cytoplasmic" evidence="1">
    <location>
        <begin position="290"/>
        <end position="310"/>
    </location>
</feature>
<feature type="transmembrane region" description="Helical" evidence="2">
    <location>
        <begin position="311"/>
        <end position="331"/>
    </location>
</feature>
<feature type="topological domain" description="Periplasmic" evidence="1">
    <location>
        <begin position="332"/>
        <end position="344"/>
    </location>
</feature>
<feature type="transmembrane region" description="Helical" evidence="2">
    <location>
        <begin position="345"/>
        <end position="365"/>
    </location>
</feature>
<feature type="topological domain" description="Cytoplasmic" evidence="1">
    <location>
        <begin position="366"/>
        <end position="389"/>
    </location>
</feature>
<gene>
    <name evidence="2" type="primary">ftsW</name>
    <name type="ordered locus">Tcr_0567</name>
</gene>
<keyword id="KW-0131">Cell cycle</keyword>
<keyword id="KW-0132">Cell division</keyword>
<keyword id="KW-0997">Cell inner membrane</keyword>
<keyword id="KW-1003">Cell membrane</keyword>
<keyword id="KW-0133">Cell shape</keyword>
<keyword id="KW-0961">Cell wall biogenesis/degradation</keyword>
<keyword id="KW-0328">Glycosyltransferase</keyword>
<keyword id="KW-0472">Membrane</keyword>
<keyword id="KW-0573">Peptidoglycan synthesis</keyword>
<keyword id="KW-0808">Transferase</keyword>
<keyword id="KW-0812">Transmembrane</keyword>
<keyword id="KW-1133">Transmembrane helix</keyword>
<reference key="1">
    <citation type="journal article" date="2006" name="PLoS Biol.">
        <title>The genome of deep-sea vent chemolithoautotroph Thiomicrospira crunogena XCL-2.</title>
        <authorList>
            <person name="Scott K.M."/>
            <person name="Sievert S.M."/>
            <person name="Abril F.N."/>
            <person name="Ball L.A."/>
            <person name="Barrett C.J."/>
            <person name="Blake R.A."/>
            <person name="Boller A.J."/>
            <person name="Chain P.S.G."/>
            <person name="Clark J.A."/>
            <person name="Davis C.R."/>
            <person name="Detter C."/>
            <person name="Do K.F."/>
            <person name="Dobrinski K.P."/>
            <person name="Faza B.I."/>
            <person name="Fitzpatrick K.A."/>
            <person name="Freyermuth S.K."/>
            <person name="Harmer T.L."/>
            <person name="Hauser L.J."/>
            <person name="Huegler M."/>
            <person name="Kerfeld C.A."/>
            <person name="Klotz M.G."/>
            <person name="Kong W.W."/>
            <person name="Land M."/>
            <person name="Lapidus A."/>
            <person name="Larimer F.W."/>
            <person name="Longo D.L."/>
            <person name="Lucas S."/>
            <person name="Malfatti S.A."/>
            <person name="Massey S.E."/>
            <person name="Martin D.D."/>
            <person name="McCuddin Z."/>
            <person name="Meyer F."/>
            <person name="Moore J.L."/>
            <person name="Ocampo L.H. Jr."/>
            <person name="Paul J.H."/>
            <person name="Paulsen I.T."/>
            <person name="Reep D.K."/>
            <person name="Ren Q."/>
            <person name="Ross R.L."/>
            <person name="Sato P.Y."/>
            <person name="Thomas P."/>
            <person name="Tinkham L.E."/>
            <person name="Zeruth G.T."/>
        </authorList>
    </citation>
    <scope>NUCLEOTIDE SEQUENCE [LARGE SCALE GENOMIC DNA]</scope>
    <source>
        <strain>DSM 25203 / XCL-2</strain>
    </source>
</reference>